<dbReference type="EMBL" id="CP000243">
    <property type="protein sequence ID" value="ABE06934.1"/>
    <property type="molecule type" value="Genomic_DNA"/>
</dbReference>
<dbReference type="RefSeq" id="WP_000808672.1">
    <property type="nucleotide sequence ID" value="NZ_CP064825.1"/>
</dbReference>
<dbReference type="KEGG" id="eci:UTI89_C1454"/>
<dbReference type="HOGENOM" id="CLU_089554_2_0_6"/>
<dbReference type="Proteomes" id="UP000001952">
    <property type="component" value="Chromosome"/>
</dbReference>
<dbReference type="GO" id="GO:0005886">
    <property type="term" value="C:plasma membrane"/>
    <property type="evidence" value="ECO:0007669"/>
    <property type="project" value="UniProtKB-SubCell"/>
</dbReference>
<dbReference type="HAMAP" id="MF_00189">
    <property type="entry name" value="YciB"/>
    <property type="match status" value="1"/>
</dbReference>
<dbReference type="InterPro" id="IPR006008">
    <property type="entry name" value="YciB"/>
</dbReference>
<dbReference type="NCBIfam" id="TIGR00997">
    <property type="entry name" value="ispZ"/>
    <property type="match status" value="1"/>
</dbReference>
<dbReference type="NCBIfam" id="NF001324">
    <property type="entry name" value="PRK00259.1-2"/>
    <property type="match status" value="1"/>
</dbReference>
<dbReference type="NCBIfam" id="NF001325">
    <property type="entry name" value="PRK00259.1-3"/>
    <property type="match status" value="1"/>
</dbReference>
<dbReference type="NCBIfam" id="NF001326">
    <property type="entry name" value="PRK00259.1-4"/>
    <property type="match status" value="1"/>
</dbReference>
<dbReference type="PANTHER" id="PTHR36917:SF1">
    <property type="entry name" value="INNER MEMBRANE-SPANNING PROTEIN YCIB"/>
    <property type="match status" value="1"/>
</dbReference>
<dbReference type="PANTHER" id="PTHR36917">
    <property type="entry name" value="INTRACELLULAR SEPTATION PROTEIN A-RELATED"/>
    <property type="match status" value="1"/>
</dbReference>
<dbReference type="Pfam" id="PF04279">
    <property type="entry name" value="IspA"/>
    <property type="match status" value="1"/>
</dbReference>
<proteinExistence type="inferred from homology"/>
<protein>
    <recommendedName>
        <fullName evidence="1">Inner membrane-spanning protein YciB</fullName>
    </recommendedName>
</protein>
<comment type="function">
    <text evidence="1">Plays a role in cell envelope biogenesis, maintenance of cell envelope integrity and membrane homeostasis.</text>
</comment>
<comment type="subcellular location">
    <subcellularLocation>
        <location evidence="1">Cell inner membrane</location>
        <topology evidence="1">Multi-pass membrane protein</topology>
    </subcellularLocation>
</comment>
<comment type="similarity">
    <text evidence="1">Belongs to the YciB family.</text>
</comment>
<feature type="chain" id="PRO_1000021011" description="Inner membrane-spanning protein YciB">
    <location>
        <begin position="1"/>
        <end position="179"/>
    </location>
</feature>
<feature type="transmembrane region" description="Helical" evidence="1">
    <location>
        <begin position="22"/>
        <end position="42"/>
    </location>
</feature>
<feature type="transmembrane region" description="Helical" evidence="1">
    <location>
        <begin position="50"/>
        <end position="70"/>
    </location>
</feature>
<feature type="transmembrane region" description="Helical" evidence="1">
    <location>
        <begin position="76"/>
        <end position="96"/>
    </location>
</feature>
<feature type="transmembrane region" description="Helical" evidence="1">
    <location>
        <begin position="121"/>
        <end position="141"/>
    </location>
</feature>
<feature type="transmembrane region" description="Helical" evidence="1">
    <location>
        <begin position="149"/>
        <end position="169"/>
    </location>
</feature>
<accession>Q1RCI0</accession>
<reference key="1">
    <citation type="journal article" date="2006" name="Proc. Natl. Acad. Sci. U.S.A.">
        <title>Identification of genes subject to positive selection in uropathogenic strains of Escherichia coli: a comparative genomics approach.</title>
        <authorList>
            <person name="Chen S.L."/>
            <person name="Hung C.-S."/>
            <person name="Xu J."/>
            <person name="Reigstad C.S."/>
            <person name="Magrini V."/>
            <person name="Sabo A."/>
            <person name="Blasiar D."/>
            <person name="Bieri T."/>
            <person name="Meyer R.R."/>
            <person name="Ozersky P."/>
            <person name="Armstrong J.R."/>
            <person name="Fulton R.S."/>
            <person name="Latreille J.P."/>
            <person name="Spieth J."/>
            <person name="Hooton T.M."/>
            <person name="Mardis E.R."/>
            <person name="Hultgren S.J."/>
            <person name="Gordon J.I."/>
        </authorList>
    </citation>
    <scope>NUCLEOTIDE SEQUENCE [LARGE SCALE GENOMIC DNA]</scope>
    <source>
        <strain>UTI89 / UPEC</strain>
    </source>
</reference>
<keyword id="KW-0997">Cell inner membrane</keyword>
<keyword id="KW-1003">Cell membrane</keyword>
<keyword id="KW-0472">Membrane</keyword>
<keyword id="KW-0812">Transmembrane</keyword>
<keyword id="KW-1133">Transmembrane helix</keyword>
<gene>
    <name evidence="1" type="primary">yciB</name>
    <name type="ordered locus">UTI89_C1454</name>
</gene>
<sequence length="179" mass="20780">MKQFLDFLPLVVFFAFYKIYDIYAATAALIVATAIVLIYSWVRFRKVEKMALITFVLVVVFGGLTLFFHNDEFIKWKVTVIYALFAGALLVSQWVMKKPLIQRMLGKELTLPQSVWSKLNLAWAVFFILCGLANIYIAFWLPQNIWVNFKVFGLTALTLIFTLLSGIYIYRHMPQEDKS</sequence>
<organism>
    <name type="scientific">Escherichia coli (strain UTI89 / UPEC)</name>
    <dbReference type="NCBI Taxonomy" id="364106"/>
    <lineage>
        <taxon>Bacteria</taxon>
        <taxon>Pseudomonadati</taxon>
        <taxon>Pseudomonadota</taxon>
        <taxon>Gammaproteobacteria</taxon>
        <taxon>Enterobacterales</taxon>
        <taxon>Enterobacteriaceae</taxon>
        <taxon>Escherichia</taxon>
    </lineage>
</organism>
<name>YCIB_ECOUT</name>
<evidence type="ECO:0000255" key="1">
    <source>
        <dbReference type="HAMAP-Rule" id="MF_00189"/>
    </source>
</evidence>